<feature type="chain" id="PRO_0000375989" description="Diacylglycerol kinase eta">
    <location>
        <begin position="1"/>
        <end position="1914"/>
    </location>
</feature>
<feature type="domain" description="PH" evidence="3">
    <location>
        <begin position="82"/>
        <end position="175"/>
    </location>
</feature>
<feature type="domain" description="DAGKc" evidence="6">
    <location>
        <begin position="350"/>
        <end position="486"/>
    </location>
</feature>
<feature type="domain" description="SAM" evidence="4">
    <location>
        <begin position="1851"/>
        <end position="1914"/>
    </location>
</feature>
<feature type="zinc finger region" description="Phorbol-ester/DAG-type 1" evidence="5">
    <location>
        <begin position="195"/>
        <end position="245"/>
    </location>
</feature>
<feature type="zinc finger region" description="Phorbol-ester/DAG-type 2" evidence="5">
    <location>
        <begin position="268"/>
        <end position="319"/>
    </location>
</feature>
<feature type="region of interest" description="Disordered" evidence="7">
    <location>
        <begin position="1"/>
        <end position="37"/>
    </location>
</feature>
<feature type="region of interest" description="Disordered" evidence="7">
    <location>
        <begin position="621"/>
        <end position="642"/>
    </location>
</feature>
<feature type="region of interest" description="Disordered" evidence="7">
    <location>
        <begin position="783"/>
        <end position="805"/>
    </location>
</feature>
<feature type="region of interest" description="Disordered" evidence="7">
    <location>
        <begin position="1016"/>
        <end position="1053"/>
    </location>
</feature>
<feature type="region of interest" description="Disordered" evidence="7">
    <location>
        <begin position="1116"/>
        <end position="1135"/>
    </location>
</feature>
<feature type="region of interest" description="Disordered" evidence="7">
    <location>
        <begin position="1175"/>
        <end position="1216"/>
    </location>
</feature>
<feature type="compositionally biased region" description="Basic and acidic residues" evidence="7">
    <location>
        <begin position="1"/>
        <end position="10"/>
    </location>
</feature>
<feature type="compositionally biased region" description="Low complexity" evidence="7">
    <location>
        <begin position="23"/>
        <end position="37"/>
    </location>
</feature>
<feature type="compositionally biased region" description="Polar residues" evidence="7">
    <location>
        <begin position="1175"/>
        <end position="1187"/>
    </location>
</feature>
<reference evidence="9" key="1">
    <citation type="journal article" date="2007" name="Nature">
        <title>Evolution of genes and genomes on the Drosophila phylogeny.</title>
        <authorList>
            <consortium name="Drosophila 12 genomes consortium"/>
        </authorList>
    </citation>
    <scope>NUCLEOTIDE SEQUENCE [LARGE SCALE GENOMIC DNA]</scope>
    <source>
        <strain evidence="9">Rob3c / Tucson 14021-0248.25</strain>
    </source>
</reference>
<gene>
    <name type="ORF">GM10981</name>
</gene>
<organism>
    <name type="scientific">Drosophila sechellia</name>
    <name type="common">Fruit fly</name>
    <dbReference type="NCBI Taxonomy" id="7238"/>
    <lineage>
        <taxon>Eukaryota</taxon>
        <taxon>Metazoa</taxon>
        <taxon>Ecdysozoa</taxon>
        <taxon>Arthropoda</taxon>
        <taxon>Hexapoda</taxon>
        <taxon>Insecta</taxon>
        <taxon>Pterygota</taxon>
        <taxon>Neoptera</taxon>
        <taxon>Endopterygota</taxon>
        <taxon>Diptera</taxon>
        <taxon>Brachycera</taxon>
        <taxon>Muscomorpha</taxon>
        <taxon>Ephydroidea</taxon>
        <taxon>Drosophilidae</taxon>
        <taxon>Drosophila</taxon>
        <taxon>Sophophora</taxon>
    </lineage>
</organism>
<accession>B4I4Y1</accession>
<comment type="function">
    <text evidence="1">Phosphorylates diacylglycerol (DAG) to generate phosphatidic acid (PA).</text>
</comment>
<comment type="catalytic activity">
    <reaction>
        <text>a 1,2-diacyl-sn-glycerol + ATP = a 1,2-diacyl-sn-glycero-3-phosphate + ADP + H(+)</text>
        <dbReference type="Rhea" id="RHEA:10272"/>
        <dbReference type="ChEBI" id="CHEBI:15378"/>
        <dbReference type="ChEBI" id="CHEBI:17815"/>
        <dbReference type="ChEBI" id="CHEBI:30616"/>
        <dbReference type="ChEBI" id="CHEBI:58608"/>
        <dbReference type="ChEBI" id="CHEBI:456216"/>
        <dbReference type="EC" id="2.7.1.107"/>
    </reaction>
</comment>
<comment type="subcellular location">
    <subcellularLocation>
        <location evidence="1">Cytoplasm</location>
    </subcellularLocation>
</comment>
<comment type="similarity">
    <text evidence="2">Belongs to the eukaryotic diacylglycerol kinase family.</text>
</comment>
<comment type="sequence caution" evidence="8">
    <conflict type="erroneous gene model prediction">
        <sequence resource="EMBL-CDS" id="EDW55274"/>
    </conflict>
</comment>
<dbReference type="EC" id="2.7.1.107"/>
<dbReference type="EMBL" id="CH480821">
    <property type="protein sequence ID" value="EDW55274.1"/>
    <property type="status" value="ALT_SEQ"/>
    <property type="molecule type" value="Genomic_DNA"/>
</dbReference>
<dbReference type="RefSeq" id="XP_002038737.1">
    <property type="nucleotide sequence ID" value="XM_002038701.1"/>
</dbReference>
<dbReference type="SMR" id="B4I4Y1"/>
<dbReference type="STRING" id="7238.B4I4Y1"/>
<dbReference type="Proteomes" id="UP000001292">
    <property type="component" value="Unassembled WGS sequence"/>
</dbReference>
<dbReference type="GO" id="GO:0005737">
    <property type="term" value="C:cytoplasm"/>
    <property type="evidence" value="ECO:0007669"/>
    <property type="project" value="UniProtKB-SubCell"/>
</dbReference>
<dbReference type="GO" id="GO:0005886">
    <property type="term" value="C:plasma membrane"/>
    <property type="evidence" value="ECO:0007669"/>
    <property type="project" value="TreeGrafter"/>
</dbReference>
<dbReference type="GO" id="GO:0005524">
    <property type="term" value="F:ATP binding"/>
    <property type="evidence" value="ECO:0007669"/>
    <property type="project" value="UniProtKB-KW"/>
</dbReference>
<dbReference type="GO" id="GO:0004143">
    <property type="term" value="F:ATP-dependent diacylglycerol kinase activity"/>
    <property type="evidence" value="ECO:0007669"/>
    <property type="project" value="UniProtKB-EC"/>
</dbReference>
<dbReference type="GO" id="GO:0008270">
    <property type="term" value="F:zinc ion binding"/>
    <property type="evidence" value="ECO:0007669"/>
    <property type="project" value="UniProtKB-KW"/>
</dbReference>
<dbReference type="GO" id="GO:0046486">
    <property type="term" value="P:glycerolipid metabolic process"/>
    <property type="evidence" value="ECO:0007669"/>
    <property type="project" value="UniProtKB-ARBA"/>
</dbReference>
<dbReference type="GO" id="GO:0007200">
    <property type="term" value="P:phospholipase C-activating G protein-coupled receptor signaling pathway"/>
    <property type="evidence" value="ECO:0007669"/>
    <property type="project" value="InterPro"/>
</dbReference>
<dbReference type="CDD" id="cd20800">
    <property type="entry name" value="C1_DGK_typeII_rpt1"/>
    <property type="match status" value="1"/>
</dbReference>
<dbReference type="CDD" id="cd20852">
    <property type="entry name" value="C1_DGK_typeII_rpt2"/>
    <property type="match status" value="1"/>
</dbReference>
<dbReference type="CDD" id="cd13274">
    <property type="entry name" value="PH_DGK_type2"/>
    <property type="match status" value="1"/>
</dbReference>
<dbReference type="CDD" id="cd09507">
    <property type="entry name" value="SAM_DGK-delta-eta"/>
    <property type="match status" value="1"/>
</dbReference>
<dbReference type="FunFam" id="1.10.150.50:FF:000021">
    <property type="entry name" value="Diacylglycerol kinase"/>
    <property type="match status" value="1"/>
</dbReference>
<dbReference type="FunFam" id="2.30.29.30:FF:000313">
    <property type="entry name" value="Diacylglycerol kinase"/>
    <property type="match status" value="1"/>
</dbReference>
<dbReference type="FunFam" id="2.60.200.40:FF:000001">
    <property type="entry name" value="Diacylglycerol kinase"/>
    <property type="match status" value="1"/>
</dbReference>
<dbReference type="FunFam" id="3.30.60.20:FF:000002">
    <property type="entry name" value="Diacylglycerol kinase"/>
    <property type="match status" value="1"/>
</dbReference>
<dbReference type="FunFam" id="3.30.60.20:FF:000029">
    <property type="entry name" value="Diacylglycerol kinase"/>
    <property type="match status" value="1"/>
</dbReference>
<dbReference type="FunFam" id="3.40.50.10330:FF:000001">
    <property type="entry name" value="Diacylglycerol kinase"/>
    <property type="match status" value="1"/>
</dbReference>
<dbReference type="Gene3D" id="2.60.200.40">
    <property type="match status" value="1"/>
</dbReference>
<dbReference type="Gene3D" id="3.30.60.20">
    <property type="match status" value="2"/>
</dbReference>
<dbReference type="Gene3D" id="2.30.29.30">
    <property type="entry name" value="Pleckstrin-homology domain (PH domain)/Phosphotyrosine-binding domain (PTB)"/>
    <property type="match status" value="1"/>
</dbReference>
<dbReference type="Gene3D" id="3.40.50.10330">
    <property type="entry name" value="Probable inorganic polyphosphate/atp-NAD kinase, domain 1"/>
    <property type="match status" value="1"/>
</dbReference>
<dbReference type="Gene3D" id="1.10.150.50">
    <property type="entry name" value="Transcription Factor, Ets-1"/>
    <property type="match status" value="1"/>
</dbReference>
<dbReference type="InterPro" id="IPR017438">
    <property type="entry name" value="ATP-NAD_kinase_N"/>
</dbReference>
<dbReference type="InterPro" id="IPR046349">
    <property type="entry name" value="C1-like_sf"/>
</dbReference>
<dbReference type="InterPro" id="IPR037607">
    <property type="entry name" value="DGK"/>
</dbReference>
<dbReference type="InterPro" id="IPR054474">
    <property type="entry name" value="DGKD_4H"/>
</dbReference>
<dbReference type="InterPro" id="IPR000756">
    <property type="entry name" value="Diacylglycerol_kin_accessory"/>
</dbReference>
<dbReference type="InterPro" id="IPR001206">
    <property type="entry name" value="Diacylglycerol_kinase_cat_dom"/>
</dbReference>
<dbReference type="InterPro" id="IPR016064">
    <property type="entry name" value="NAD/diacylglycerol_kinase_sf"/>
</dbReference>
<dbReference type="InterPro" id="IPR002219">
    <property type="entry name" value="PE/DAG-bd"/>
</dbReference>
<dbReference type="InterPro" id="IPR011993">
    <property type="entry name" value="PH-like_dom_sf"/>
</dbReference>
<dbReference type="InterPro" id="IPR001849">
    <property type="entry name" value="PH_domain"/>
</dbReference>
<dbReference type="InterPro" id="IPR001660">
    <property type="entry name" value="SAM"/>
</dbReference>
<dbReference type="InterPro" id="IPR013761">
    <property type="entry name" value="SAM/pointed_sf"/>
</dbReference>
<dbReference type="PANTHER" id="PTHR11255">
    <property type="entry name" value="DIACYLGLYCEROL KINASE"/>
    <property type="match status" value="1"/>
</dbReference>
<dbReference type="PANTHER" id="PTHR11255:SF109">
    <property type="entry name" value="DIACYLGLYCEROL KINASE ETA"/>
    <property type="match status" value="1"/>
</dbReference>
<dbReference type="Pfam" id="PF00130">
    <property type="entry name" value="C1_1"/>
    <property type="match status" value="2"/>
</dbReference>
<dbReference type="Pfam" id="PF00609">
    <property type="entry name" value="DAGK_acc"/>
    <property type="match status" value="1"/>
</dbReference>
<dbReference type="Pfam" id="PF00781">
    <property type="entry name" value="DAGK_cat"/>
    <property type="match status" value="1"/>
</dbReference>
<dbReference type="Pfam" id="PF22944">
    <property type="entry name" value="DGKD_4H"/>
    <property type="match status" value="1"/>
</dbReference>
<dbReference type="Pfam" id="PF00169">
    <property type="entry name" value="PH"/>
    <property type="match status" value="1"/>
</dbReference>
<dbReference type="Pfam" id="PF00536">
    <property type="entry name" value="SAM_1"/>
    <property type="match status" value="1"/>
</dbReference>
<dbReference type="SMART" id="SM00109">
    <property type="entry name" value="C1"/>
    <property type="match status" value="2"/>
</dbReference>
<dbReference type="SMART" id="SM00045">
    <property type="entry name" value="DAGKa"/>
    <property type="match status" value="1"/>
</dbReference>
<dbReference type="SMART" id="SM00046">
    <property type="entry name" value="DAGKc"/>
    <property type="match status" value="1"/>
</dbReference>
<dbReference type="SMART" id="SM00233">
    <property type="entry name" value="PH"/>
    <property type="match status" value="1"/>
</dbReference>
<dbReference type="SMART" id="SM00454">
    <property type="entry name" value="SAM"/>
    <property type="match status" value="1"/>
</dbReference>
<dbReference type="SUPFAM" id="SSF57889">
    <property type="entry name" value="Cysteine-rich domain"/>
    <property type="match status" value="2"/>
</dbReference>
<dbReference type="SUPFAM" id="SSF111331">
    <property type="entry name" value="NAD kinase/diacylglycerol kinase-like"/>
    <property type="match status" value="2"/>
</dbReference>
<dbReference type="SUPFAM" id="SSF50729">
    <property type="entry name" value="PH domain-like"/>
    <property type="match status" value="1"/>
</dbReference>
<dbReference type="SUPFAM" id="SSF47769">
    <property type="entry name" value="SAM/Pointed domain"/>
    <property type="match status" value="1"/>
</dbReference>
<dbReference type="PROSITE" id="PS50146">
    <property type="entry name" value="DAGK"/>
    <property type="match status" value="1"/>
</dbReference>
<dbReference type="PROSITE" id="PS50003">
    <property type="entry name" value="PH_DOMAIN"/>
    <property type="match status" value="1"/>
</dbReference>
<dbReference type="PROSITE" id="PS50105">
    <property type="entry name" value="SAM_DOMAIN"/>
    <property type="match status" value="1"/>
</dbReference>
<dbReference type="PROSITE" id="PS00479">
    <property type="entry name" value="ZF_DAG_PE_1"/>
    <property type="match status" value="2"/>
</dbReference>
<dbReference type="PROSITE" id="PS50081">
    <property type="entry name" value="ZF_DAG_PE_2"/>
    <property type="match status" value="2"/>
</dbReference>
<proteinExistence type="inferred from homology"/>
<sequence length="1914" mass="213869">MSHLKLDTLHVQRSPRGSRRSSRSSGRSSACSSGSISPVPIIPIISISHDGDESESESEIETEPARLFQRRMSIKCTNNLAAIIKEGFLLKHTWSFQRWRRRYFRLKRNMLFYAKDEKCDVFDDIDLSDLCYFECGIKNVNHSFQIITPTRSLVLCAESRREMEDWLGSLKTATAPQRPRGDSFLIEQHDILSNHHHWYATSHARPTYCNVCRDALSGVTSHGLSCEVCKCKVHKRCAAKSIANCKWTTLASVGKDIIEQADGSIIMPHQWMEGNLPVSSMCAVCKKTCGSVLRLQDWRCLWCRATVHVACRPQMAVACPIGPAKLSVVPPTSVHSISTDDAWDVASPKGNFSPLLVFVNSKSGDNQGVKFLRRFKQLLNPAQVFDLISTGPSLGLRLFRHFEMFRILVCSGDGSVGWVLSEIDRFNMHKQCQVAVMPLGTGNDLARVLGWGSSCDDDTHLPQILERYESASTKMLDRWSIMVFEKAIPVPKTPKMSISTEQEAMLTGMVTSANHHLRFIVETNDTQTLISSTRNLCDTVDDLVCRISEHHKDDEQLAVKCDILRQKLNMLLDALQEEEIGAHSGDDLIATIRSLIARSIPVTPGSNAYLLNPNISIEKTEKDQINSKERRNSRSLRSSEKEALQCRANSVKRAIYNVVEHSEPGRPKRYQRKLSITPFEALKLPTNASGESTPCTSPLPIIPPINIISPTMETSRLTCISPLPDTRRDSVDENFFNSINLPAPRQFADSRRSSGVPEVIQEIEEGANGETVYRRSRMSLTGGANIDDAGNRLSPCSDGGENTPTERKLDFLRVPIHTGEPIVDPLCDYRPHEVFERNYYMTREMDKDKEKDKEKDKPVEIDIEKDTCVEKEGSMPEEKLVHTCNLQVPGVVVTPNPQNVYSSASITIIDTDAQTTTEQSSSDDLGGEASDVLSAISNEECSVASEIFDKQDAGQTVGDIIQNMDASNFTHIDSPETSDETEAMPGESIMDDISSVLGHDITYALQDNTLTDDTTTLCSEHVGPPKPPRKKSLSALSRTQAHPRRRNSSPPRIARLARMDSDDNPQQFGFENIVFEIDNRCDDQKMREPPRYCSLAQFVEGNDIARQSFKQLMLEQHRGGDNDSEYPEHQQTPTNKGANLLITTSEDELSTQTAIKIEIQDIDATVRNLNSSMKPNTILTTSTSPTKKSGHGQDISVVVRPPTPLRGDSTKPTVSLLPVSSGGAMAVSMTCSGMLGVRAMNASEIRRHSSHAPGLAVREFDKDKDRRHSGFNPNQLTLDPEHARFLSSSPAASRRISCGSLFKKKNKQIATKRSYGLFSVRFFVVAEPDFRLATLALIRPLIPLNEALPNLQTLKGSKSSLFMGSTLFGFDHLASAEKDKEEKGGKDKEKTPTEETNRKLPIINPLVRLPNWPLANGGGFISKCLLANADTLCAAVSPLMDPDETLLAGYHEKCVMNNYFGIGIDAKISLDFHNKREEHPEKCRSRARNYMWYGVLGSKQLLQKTCKNLEQRVQLECDGQRIPLPELQGIVILNIPSFMGGTNFWGSSTKKDDIFLPPSFDDRVLEVVAVFGSVQMAASRLINLQHHRIAQCQSVQINILGDEEIPIQVDGEAWLQPPGMIRILHKNRVQMLCRNRSLELSLKSWQEKQRQHSISIQRDASSTASEHANSTDEVISERECYVLLNFIEAVSSLVKWVKFLIISHPALQHDLYEVACRASEALESIHPQGKLLEGPSLRTKLVEVIDSSRQLYDDACTLLRDRGHSLILREDLETKLSAALANMEMELKKCSVQKCIDGKLRAYFNVLAPNEESDGRRKSRPFWVRLRSGSTAGQQAFKPPLTNTREAPNNWSVNEVVTWLETMQLSEYVDSFLKNDIRGKELLTLGRRDLKDLGVVKVGHVKRILQAIKDLSEN</sequence>
<protein>
    <recommendedName>
        <fullName evidence="1">Diacylglycerol kinase eta</fullName>
        <shortName evidence="1">DAG kinase eta</shortName>
        <ecNumber>2.7.1.107</ecNumber>
    </recommendedName>
</protein>
<keyword id="KW-0067">ATP-binding</keyword>
<keyword id="KW-0963">Cytoplasm</keyword>
<keyword id="KW-0418">Kinase</keyword>
<keyword id="KW-0479">Metal-binding</keyword>
<keyword id="KW-0547">Nucleotide-binding</keyword>
<keyword id="KW-0597">Phosphoprotein</keyword>
<keyword id="KW-1185">Reference proteome</keyword>
<keyword id="KW-0677">Repeat</keyword>
<keyword id="KW-0808">Transferase</keyword>
<keyword id="KW-0862">Zinc</keyword>
<keyword id="KW-0863">Zinc-finger</keyword>
<name>DGKH_DROSE</name>
<evidence type="ECO:0000250" key="1">
    <source>
        <dbReference type="UniProtKB" id="Q86XP1"/>
    </source>
</evidence>
<evidence type="ECO:0000255" key="2"/>
<evidence type="ECO:0000255" key="3">
    <source>
        <dbReference type="PROSITE-ProRule" id="PRU00145"/>
    </source>
</evidence>
<evidence type="ECO:0000255" key="4">
    <source>
        <dbReference type="PROSITE-ProRule" id="PRU00184"/>
    </source>
</evidence>
<evidence type="ECO:0000255" key="5">
    <source>
        <dbReference type="PROSITE-ProRule" id="PRU00226"/>
    </source>
</evidence>
<evidence type="ECO:0000255" key="6">
    <source>
        <dbReference type="PROSITE-ProRule" id="PRU00783"/>
    </source>
</evidence>
<evidence type="ECO:0000256" key="7">
    <source>
        <dbReference type="SAM" id="MobiDB-lite"/>
    </source>
</evidence>
<evidence type="ECO:0000305" key="8"/>
<evidence type="ECO:0000312" key="9">
    <source>
        <dbReference type="EMBL" id="EDW55274.1"/>
    </source>
</evidence>